<name>E321_ADE1P</name>
<protein>
    <recommendedName>
        <fullName>Early E3 20.6 kDa glycoprotein</fullName>
    </recommendedName>
</protein>
<organism>
    <name type="scientific">Human adenovirus B serotype 11 (strain Slobiski)</name>
    <name type="common">HAdV-11</name>
    <name type="synonym">Human adenovirus 11P (strain Slobiski)</name>
    <dbReference type="NCBI Taxonomy" id="343462"/>
    <lineage>
        <taxon>Viruses</taxon>
        <taxon>Varidnaviria</taxon>
        <taxon>Bamfordvirae</taxon>
        <taxon>Preplasmiviricota</taxon>
        <taxon>Tectiliviricetes</taxon>
        <taxon>Rowavirales</taxon>
        <taxon>Adenoviridae</taxon>
        <taxon>Mastadenovirus</taxon>
        <taxon>Human mastadenovirus B</taxon>
    </lineage>
</organism>
<proteinExistence type="inferred from homology"/>
<evidence type="ECO:0000255" key="1"/>
<evidence type="ECO:0000305" key="2"/>
<organismHost>
    <name type="scientific">Homo sapiens</name>
    <name type="common">Human</name>
    <dbReference type="NCBI Taxonomy" id="9606"/>
</organismHost>
<reference key="1">
    <citation type="journal article" date="1992" name="Virology">
        <title>The nucleotide sequence of adenovirus type 11 early 3 region: comparison of genome type Ad11p and Ad11a.</title>
        <authorList>
            <person name="Mei Y.-F."/>
            <person name="Wadell G."/>
        </authorList>
    </citation>
    <scope>NUCLEOTIDE SEQUENCE [GENOMIC DNA]</scope>
</reference>
<reference key="2">
    <citation type="journal article" date="2003" name="J. Gen. Virol.">
        <title>Comparative analysis of the genome organization of human adenovirus 11, a member of the human adenovirus species B, and the commonly used human adenovirus 5 vector, a member of species C.</title>
        <authorList>
            <person name="Mei Y.-F."/>
            <person name="Skog J."/>
            <person name="Lindman K."/>
            <person name="Wadell G."/>
        </authorList>
    </citation>
    <scope>NUCLEOTIDE SEQUENCE [GENOMIC DNA]</scope>
</reference>
<reference key="3">
    <citation type="journal article" date="2003" name="Virology">
        <title>The complete nucleotide sequence, genome organization, and origin of human adenovirus type 11.</title>
        <authorList>
            <person name="Stone D."/>
            <person name="Furthmann A."/>
            <person name="Sandig V."/>
            <person name="Lieber A."/>
        </authorList>
    </citation>
    <scope>NUCLEOTIDE SEQUENCE [GENOMIC DNA]</scope>
</reference>
<dbReference type="EMBL" id="AF532578">
    <property type="protein sequence ID" value="AAP49190.1"/>
    <property type="molecule type" value="Genomic_DNA"/>
</dbReference>
<dbReference type="EMBL" id="AY163756">
    <property type="protein sequence ID" value="AAN62497.1"/>
    <property type="molecule type" value="Genomic_DNA"/>
</dbReference>
<dbReference type="PIR" id="C44057">
    <property type="entry name" value="C44057"/>
</dbReference>
<dbReference type="SMR" id="P35770"/>
<dbReference type="Proteomes" id="UP000128793">
    <property type="component" value="Segment"/>
</dbReference>
<dbReference type="Proteomes" id="UP000152074">
    <property type="component" value="Segment"/>
</dbReference>
<dbReference type="InterPro" id="IPR003471">
    <property type="entry name" value="Adeno_E3_CR1"/>
</dbReference>
<dbReference type="InterPro" id="IPR003470">
    <property type="entry name" value="Adeno_E3_CR2"/>
</dbReference>
<dbReference type="Pfam" id="PF02440">
    <property type="entry name" value="Adeno_E3_CR1"/>
    <property type="match status" value="1"/>
</dbReference>
<dbReference type="Pfam" id="PF02439">
    <property type="entry name" value="Adeno_E3_CR2"/>
    <property type="match status" value="1"/>
</dbReference>
<keyword id="KW-0244">Early protein</keyword>
<keyword id="KW-0325">Glycoprotein</keyword>
<sequence length="187" mass="20592">MVSTTTFLMLTSLATLTSARSHLTVTIGSNCTLKGPQGGHVFWWRIYDNGWFTKPCDQPGRFFCNGRDLTIINVTANDKGFYYGTDYKSSLDYNIIVLPSTTPAPRTTTFSSSSVANNTISNPTFAALLKRTVNNSTTSHTTISTSTISIIAAVTIGISILVFTITYYACCYRKDKHKGDPLLRFDI</sequence>
<feature type="chain" id="PRO_0000221759" description="Early E3 20.6 kDa glycoprotein">
    <location>
        <begin position="1"/>
        <end position="187"/>
    </location>
</feature>
<feature type="glycosylation site" description="N-linked (GlcNAc...) asparagine; by host" evidence="1">
    <location>
        <position position="30"/>
    </location>
</feature>
<feature type="glycosylation site" description="N-linked (GlcNAc...) asparagine; by host" evidence="1">
    <location>
        <position position="73"/>
    </location>
</feature>
<feature type="glycosylation site" description="N-linked (GlcNAc...) asparagine; by host" evidence="1">
    <location>
        <position position="117"/>
    </location>
</feature>
<feature type="glycosylation site" description="N-linked (GlcNAc...) asparagine; by host" evidence="1">
    <location>
        <position position="134"/>
    </location>
</feature>
<feature type="glycosylation site" description="N-linked (GlcNAc...) asparagine; by host" evidence="1">
    <location>
        <position position="135"/>
    </location>
</feature>
<accession>P35770</accession>
<comment type="similarity">
    <text evidence="2">Belongs to the adenoviridae E3_20 family.</text>
</comment>